<protein>
    <recommendedName>
        <fullName>Calcium-binding protein NCS-1</fullName>
    </recommendedName>
</protein>
<accession>Q09711</accession>
<gene>
    <name type="primary">ncs1</name>
    <name type="ORF">SPAC18B11.04</name>
</gene>
<dbReference type="EMBL" id="AY225216">
    <property type="protein sequence ID" value="AAP48992.1"/>
    <property type="molecule type" value="mRNA"/>
</dbReference>
<dbReference type="EMBL" id="CU329670">
    <property type="protein sequence ID" value="CAA90589.1"/>
    <property type="molecule type" value="Genomic_DNA"/>
</dbReference>
<dbReference type="PIR" id="S58303">
    <property type="entry name" value="S58303"/>
</dbReference>
<dbReference type="RefSeq" id="NP_592879.1">
    <property type="nucleotide sequence ID" value="NM_001018279.2"/>
</dbReference>
<dbReference type="PDB" id="2L2E">
    <property type="method" value="NMR"/>
    <property type="chains" value="A=2-190"/>
</dbReference>
<dbReference type="PDBsum" id="2L2E"/>
<dbReference type="BMRB" id="Q09711"/>
<dbReference type="SMR" id="Q09711"/>
<dbReference type="BioGRID" id="278981">
    <property type="interactions" value="3"/>
</dbReference>
<dbReference type="FunCoup" id="Q09711">
    <property type="interactions" value="77"/>
</dbReference>
<dbReference type="STRING" id="284812.Q09711"/>
<dbReference type="iPTMnet" id="Q09711"/>
<dbReference type="PaxDb" id="4896-SPAC18B11.04.1"/>
<dbReference type="EnsemblFungi" id="SPAC18B11.04.1">
    <property type="protein sequence ID" value="SPAC18B11.04.1:pep"/>
    <property type="gene ID" value="SPAC18B11.04"/>
</dbReference>
<dbReference type="GeneID" id="2542523"/>
<dbReference type="KEGG" id="spo:2542523"/>
<dbReference type="PomBase" id="SPAC18B11.04">
    <property type="gene designation" value="ncs1"/>
</dbReference>
<dbReference type="VEuPathDB" id="FungiDB:SPAC18B11.04"/>
<dbReference type="eggNOG" id="KOG0044">
    <property type="taxonomic scope" value="Eukaryota"/>
</dbReference>
<dbReference type="HOGENOM" id="CLU_072366_1_2_1"/>
<dbReference type="InParanoid" id="Q09711"/>
<dbReference type="OMA" id="EYVFNVF"/>
<dbReference type="PhylomeDB" id="Q09711"/>
<dbReference type="Reactome" id="R-SPO-2514859">
    <property type="pathway name" value="Inactivation, recovery and regulation of the phototransduction cascade"/>
</dbReference>
<dbReference type="EvolutionaryTrace" id="Q09711"/>
<dbReference type="PRO" id="PR:Q09711"/>
<dbReference type="Proteomes" id="UP000002485">
    <property type="component" value="Chromosome I"/>
</dbReference>
<dbReference type="GO" id="GO:0005737">
    <property type="term" value="C:cytoplasm"/>
    <property type="evidence" value="ECO:0000314"/>
    <property type="project" value="PomBase"/>
</dbReference>
<dbReference type="GO" id="GO:0005829">
    <property type="term" value="C:cytosol"/>
    <property type="evidence" value="ECO:0007005"/>
    <property type="project" value="PomBase"/>
</dbReference>
<dbReference type="GO" id="GO:0043231">
    <property type="term" value="C:intracellular membrane-bounded organelle"/>
    <property type="evidence" value="ECO:0000318"/>
    <property type="project" value="GO_Central"/>
</dbReference>
<dbReference type="GO" id="GO:0016020">
    <property type="term" value="C:membrane"/>
    <property type="evidence" value="ECO:0000318"/>
    <property type="project" value="GO_Central"/>
</dbReference>
<dbReference type="GO" id="GO:0005634">
    <property type="term" value="C:nucleus"/>
    <property type="evidence" value="ECO:0007005"/>
    <property type="project" value="PomBase"/>
</dbReference>
<dbReference type="GO" id="GO:0005886">
    <property type="term" value="C:plasma membrane"/>
    <property type="evidence" value="ECO:0000314"/>
    <property type="project" value="PomBase"/>
</dbReference>
<dbReference type="GO" id="GO:0032588">
    <property type="term" value="C:trans-Golgi network membrane"/>
    <property type="evidence" value="ECO:0000269"/>
    <property type="project" value="PomBase"/>
</dbReference>
<dbReference type="GO" id="GO:0098744">
    <property type="term" value="F:1-phosphatidylinositol 4-kinase activator activity"/>
    <property type="evidence" value="ECO:0000314"/>
    <property type="project" value="PomBase"/>
</dbReference>
<dbReference type="GO" id="GO:0005509">
    <property type="term" value="F:calcium ion binding"/>
    <property type="evidence" value="ECO:0000314"/>
    <property type="project" value="PomBase"/>
</dbReference>
<dbReference type="GO" id="GO:0019722">
    <property type="term" value="P:calcium-mediated signaling"/>
    <property type="evidence" value="ECO:0000314"/>
    <property type="project" value="PomBase"/>
</dbReference>
<dbReference type="GO" id="GO:1905949">
    <property type="term" value="P:negative regulation of calcium ion import across plasma membrane"/>
    <property type="evidence" value="ECO:0000315"/>
    <property type="project" value="PomBase"/>
</dbReference>
<dbReference type="GO" id="GO:0046854">
    <property type="term" value="P:phosphatidylinositol phosphate biosynthetic process"/>
    <property type="evidence" value="ECO:0000269"/>
    <property type="project" value="PomBase"/>
</dbReference>
<dbReference type="GO" id="GO:0009966">
    <property type="term" value="P:regulation of signal transduction"/>
    <property type="evidence" value="ECO:0000318"/>
    <property type="project" value="GO_Central"/>
</dbReference>
<dbReference type="GO" id="GO:0030435">
    <property type="term" value="P:sporulation resulting in formation of a cellular spore"/>
    <property type="evidence" value="ECO:0007669"/>
    <property type="project" value="UniProtKB-KW"/>
</dbReference>
<dbReference type="CDD" id="cd00051">
    <property type="entry name" value="EFh"/>
    <property type="match status" value="2"/>
</dbReference>
<dbReference type="FunFam" id="1.10.238.10:FF:000009">
    <property type="entry name" value="Visinin-like protein 1"/>
    <property type="match status" value="1"/>
</dbReference>
<dbReference type="Gene3D" id="1.10.238.10">
    <property type="entry name" value="EF-hand"/>
    <property type="match status" value="1"/>
</dbReference>
<dbReference type="InterPro" id="IPR011992">
    <property type="entry name" value="EF-hand-dom_pair"/>
</dbReference>
<dbReference type="InterPro" id="IPR018247">
    <property type="entry name" value="EF_Hand_1_Ca_BS"/>
</dbReference>
<dbReference type="InterPro" id="IPR002048">
    <property type="entry name" value="EF_hand_dom"/>
</dbReference>
<dbReference type="InterPro" id="IPR028846">
    <property type="entry name" value="Recoverin"/>
</dbReference>
<dbReference type="PANTHER" id="PTHR23055">
    <property type="entry name" value="CALCIUM BINDING PROTEINS"/>
    <property type="match status" value="1"/>
</dbReference>
<dbReference type="PANTHER" id="PTHR23055:SF178">
    <property type="entry name" value="NEUROCALCIN HOMOLOG"/>
    <property type="match status" value="1"/>
</dbReference>
<dbReference type="Pfam" id="PF13499">
    <property type="entry name" value="EF-hand_7"/>
    <property type="match status" value="2"/>
</dbReference>
<dbReference type="PRINTS" id="PR00450">
    <property type="entry name" value="RECOVERIN"/>
</dbReference>
<dbReference type="SMART" id="SM00054">
    <property type="entry name" value="EFh"/>
    <property type="match status" value="3"/>
</dbReference>
<dbReference type="SUPFAM" id="SSF47473">
    <property type="entry name" value="EF-hand"/>
    <property type="match status" value="1"/>
</dbReference>
<dbReference type="PROSITE" id="PS00018">
    <property type="entry name" value="EF_HAND_1"/>
    <property type="match status" value="3"/>
</dbReference>
<dbReference type="PROSITE" id="PS50222">
    <property type="entry name" value="EF_HAND_2"/>
    <property type="match status" value="4"/>
</dbReference>
<feature type="initiator methionine" description="Removed">
    <location>
        <position position="1"/>
    </location>
</feature>
<feature type="chain" id="PRO_0000073794" description="Calcium-binding protein NCS-1">
    <location>
        <begin position="2"/>
        <end position="190"/>
    </location>
</feature>
<feature type="domain" description="EF-hand 1" evidence="1">
    <location>
        <begin position="40"/>
        <end position="58"/>
    </location>
</feature>
<feature type="domain" description="EF-hand 2" evidence="1">
    <location>
        <begin position="60"/>
        <end position="95"/>
    </location>
</feature>
<feature type="domain" description="EF-hand 3" evidence="1">
    <location>
        <begin position="96"/>
        <end position="131"/>
    </location>
</feature>
<feature type="domain" description="EF-hand 4" evidence="1">
    <location>
        <begin position="144"/>
        <end position="179"/>
    </location>
</feature>
<feature type="binding site" evidence="1">
    <location>
        <position position="73"/>
    </location>
    <ligand>
        <name>Ca(2+)</name>
        <dbReference type="ChEBI" id="CHEBI:29108"/>
        <label>1</label>
    </ligand>
</feature>
<feature type="binding site" evidence="1">
    <location>
        <position position="75"/>
    </location>
    <ligand>
        <name>Ca(2+)</name>
        <dbReference type="ChEBI" id="CHEBI:29108"/>
        <label>1</label>
    </ligand>
</feature>
<feature type="binding site" evidence="1">
    <location>
        <position position="77"/>
    </location>
    <ligand>
        <name>Ca(2+)</name>
        <dbReference type="ChEBI" id="CHEBI:29108"/>
        <label>1</label>
    </ligand>
</feature>
<feature type="binding site" evidence="1">
    <location>
        <position position="79"/>
    </location>
    <ligand>
        <name>Ca(2+)</name>
        <dbReference type="ChEBI" id="CHEBI:29108"/>
        <label>1</label>
    </ligand>
</feature>
<feature type="binding site" evidence="1">
    <location>
        <position position="84"/>
    </location>
    <ligand>
        <name>Ca(2+)</name>
        <dbReference type="ChEBI" id="CHEBI:29108"/>
        <label>1</label>
    </ligand>
</feature>
<feature type="binding site" evidence="1">
    <location>
        <position position="109"/>
    </location>
    <ligand>
        <name>Ca(2+)</name>
        <dbReference type="ChEBI" id="CHEBI:29108"/>
        <label>2</label>
    </ligand>
</feature>
<feature type="binding site" evidence="1">
    <location>
        <position position="111"/>
    </location>
    <ligand>
        <name>Ca(2+)</name>
        <dbReference type="ChEBI" id="CHEBI:29108"/>
        <label>2</label>
    </ligand>
</feature>
<feature type="binding site" evidence="1">
    <location>
        <position position="113"/>
    </location>
    <ligand>
        <name>Ca(2+)</name>
        <dbReference type="ChEBI" id="CHEBI:29108"/>
        <label>2</label>
    </ligand>
</feature>
<feature type="binding site" evidence="1">
    <location>
        <position position="120"/>
    </location>
    <ligand>
        <name>Ca(2+)</name>
        <dbReference type="ChEBI" id="CHEBI:29108"/>
        <label>2</label>
    </ligand>
</feature>
<feature type="binding site" evidence="1">
    <location>
        <position position="157"/>
    </location>
    <ligand>
        <name>Ca(2+)</name>
        <dbReference type="ChEBI" id="CHEBI:29108"/>
        <label>3</label>
    </ligand>
</feature>
<feature type="binding site" evidence="1">
    <location>
        <position position="159"/>
    </location>
    <ligand>
        <name>Ca(2+)</name>
        <dbReference type="ChEBI" id="CHEBI:29108"/>
        <label>3</label>
    </ligand>
</feature>
<feature type="binding site" evidence="1">
    <location>
        <position position="161"/>
    </location>
    <ligand>
        <name>Ca(2+)</name>
        <dbReference type="ChEBI" id="CHEBI:29108"/>
        <label>3</label>
    </ligand>
</feature>
<feature type="binding site" evidence="1">
    <location>
        <position position="163"/>
    </location>
    <ligand>
        <name>Ca(2+)</name>
        <dbReference type="ChEBI" id="CHEBI:29108"/>
        <label>3</label>
    </ligand>
</feature>
<feature type="binding site" evidence="1">
    <location>
        <position position="168"/>
    </location>
    <ligand>
        <name>Ca(2+)</name>
        <dbReference type="ChEBI" id="CHEBI:29108"/>
        <label>3</label>
    </ligand>
</feature>
<feature type="lipid moiety-binding region" description="N-myristoyl glycine" evidence="2">
    <location>
        <position position="2"/>
    </location>
</feature>
<feature type="mutagenesis site" description="Nutrition insensitive sexual development." evidence="2">
    <original>G</original>
    <variation>A</variation>
    <location>
        <position position="2"/>
    </location>
</feature>
<feature type="mutagenesis site" description="Growth defect at high levels of extracellular calcium." evidence="2">
    <original>E</original>
    <variation>Q</variation>
    <location>
        <position position="84"/>
    </location>
</feature>
<feature type="mutagenesis site" description="Growth defect at high levels of extracellular calcium." evidence="2">
    <original>E</original>
    <variation>Q</variation>
    <location>
        <position position="120"/>
    </location>
</feature>
<feature type="mutagenesis site" description="Growth defect at high levels of extracellular calcium." evidence="2">
    <original>E</original>
    <variation>Q</variation>
    <location>
        <position position="168"/>
    </location>
</feature>
<feature type="helix" evidence="4">
    <location>
        <begin position="10"/>
        <end position="20"/>
    </location>
</feature>
<feature type="helix" evidence="4">
    <location>
        <begin position="25"/>
        <end position="37"/>
    </location>
</feature>
<feature type="helix" evidence="4">
    <location>
        <begin position="45"/>
        <end position="55"/>
    </location>
</feature>
<feature type="helix" evidence="4">
    <location>
        <begin position="61"/>
        <end position="72"/>
    </location>
</feature>
<feature type="strand" evidence="4">
    <location>
        <begin position="74"/>
        <end position="76"/>
    </location>
</feature>
<feature type="helix" evidence="4">
    <location>
        <begin position="82"/>
        <end position="89"/>
    </location>
</feature>
<feature type="helix" evidence="4">
    <location>
        <begin position="98"/>
        <end position="108"/>
    </location>
</feature>
<feature type="helix" evidence="4">
    <location>
        <begin position="118"/>
        <end position="135"/>
    </location>
</feature>
<feature type="helix" evidence="4">
    <location>
        <begin position="146"/>
        <end position="156"/>
    </location>
</feature>
<feature type="helix" evidence="4">
    <location>
        <begin position="166"/>
        <end position="174"/>
    </location>
</feature>
<feature type="helix" evidence="4">
    <location>
        <begin position="178"/>
        <end position="184"/>
    </location>
</feature>
<name>NCS1_SCHPO</name>
<proteinExistence type="evidence at protein level"/>
<comment type="function">
    <text evidence="2">Negatively regulates sporulation perhaps by controlling Ca(2+)-dependent desensitization of git3.</text>
</comment>
<comment type="subcellular location">
    <subcellularLocation>
        <location evidence="2">Membrane</location>
        <topology evidence="2">Peripheral membrane protein</topology>
    </subcellularLocation>
</comment>
<comment type="miscellaneous">
    <text>Binds 3 calcium ions via the second, third and fourth EF-hand.</text>
</comment>
<comment type="similarity">
    <text evidence="3">Belongs to the recoverin family.</text>
</comment>
<sequence length="190" mass="22033">MGKSQSKLSQDQLQDLVRSTRFDKKELQQWYKGFFKDCPSGHLNKSEFQKIYKQFFPFGDPSAFAEYVFNVFDADKNGYIDFKEFICALSVTSRGELNDKLIWAFQLYDLDNNGLISYDEMLRIVDAIYKMVGSMVKLPEDEDTPEKRVNKIFNMMDKNKDGQLTLEEFCEGSKRDPTIVSALSLYDGLV</sequence>
<organism>
    <name type="scientific">Schizosaccharomyces pombe (strain 972 / ATCC 24843)</name>
    <name type="common">Fission yeast</name>
    <dbReference type="NCBI Taxonomy" id="284812"/>
    <lineage>
        <taxon>Eukaryota</taxon>
        <taxon>Fungi</taxon>
        <taxon>Dikarya</taxon>
        <taxon>Ascomycota</taxon>
        <taxon>Taphrinomycotina</taxon>
        <taxon>Schizosaccharomycetes</taxon>
        <taxon>Schizosaccharomycetales</taxon>
        <taxon>Schizosaccharomycetaceae</taxon>
        <taxon>Schizosaccharomyces</taxon>
    </lineage>
</organism>
<keyword id="KW-0002">3D-structure</keyword>
<keyword id="KW-0106">Calcium</keyword>
<keyword id="KW-0449">Lipoprotein</keyword>
<keyword id="KW-0472">Membrane</keyword>
<keyword id="KW-0479">Metal-binding</keyword>
<keyword id="KW-0519">Myristate</keyword>
<keyword id="KW-1185">Reference proteome</keyword>
<keyword id="KW-0677">Repeat</keyword>
<keyword id="KW-0749">Sporulation</keyword>
<evidence type="ECO:0000255" key="1">
    <source>
        <dbReference type="PROSITE-ProRule" id="PRU00448"/>
    </source>
</evidence>
<evidence type="ECO:0000269" key="2">
    <source>
    </source>
</evidence>
<evidence type="ECO:0000305" key="3"/>
<evidence type="ECO:0007829" key="4">
    <source>
        <dbReference type="PDB" id="2L2E"/>
    </source>
</evidence>
<reference key="1">
    <citation type="journal article" date="2004" name="J. Biol. Chem.">
        <title>Fission yeast homolog of neuronal calcium sensor-1 (Ncs1p) regulates sporulation and confers calcium tolerance.</title>
        <authorList>
            <person name="Hamasaki-Katagiri N."/>
            <person name="Molchanova T."/>
            <person name="Takeda K."/>
            <person name="Ames J.B."/>
        </authorList>
    </citation>
    <scope>NUCLEOTIDE SEQUENCE [MRNA]</scope>
    <scope>STRUCTURE BY NMR</scope>
    <scope>FUNCTION</scope>
    <scope>SUBCELLULAR LOCATION</scope>
    <scope>MYRISTOYLATION AT GLY-2</scope>
    <scope>CALCIUM-BINDING</scope>
    <scope>MUTAGENESIS OF GLY-2; GLU-84; GLU-120 AND GLU-168</scope>
    <source>
        <strain>972 / ATCC 24843</strain>
    </source>
</reference>
<reference key="2">
    <citation type="journal article" date="2002" name="Nature">
        <title>The genome sequence of Schizosaccharomyces pombe.</title>
        <authorList>
            <person name="Wood V."/>
            <person name="Gwilliam R."/>
            <person name="Rajandream M.A."/>
            <person name="Lyne M.H."/>
            <person name="Lyne R."/>
            <person name="Stewart A."/>
            <person name="Sgouros J.G."/>
            <person name="Peat N."/>
            <person name="Hayles J."/>
            <person name="Baker S.G."/>
            <person name="Basham D."/>
            <person name="Bowman S."/>
            <person name="Brooks K."/>
            <person name="Brown D."/>
            <person name="Brown S."/>
            <person name="Chillingworth T."/>
            <person name="Churcher C.M."/>
            <person name="Collins M."/>
            <person name="Connor R."/>
            <person name="Cronin A."/>
            <person name="Davis P."/>
            <person name="Feltwell T."/>
            <person name="Fraser A."/>
            <person name="Gentles S."/>
            <person name="Goble A."/>
            <person name="Hamlin N."/>
            <person name="Harris D.E."/>
            <person name="Hidalgo J."/>
            <person name="Hodgson G."/>
            <person name="Holroyd S."/>
            <person name="Hornsby T."/>
            <person name="Howarth S."/>
            <person name="Huckle E.J."/>
            <person name="Hunt S."/>
            <person name="Jagels K."/>
            <person name="James K.D."/>
            <person name="Jones L."/>
            <person name="Jones M."/>
            <person name="Leather S."/>
            <person name="McDonald S."/>
            <person name="McLean J."/>
            <person name="Mooney P."/>
            <person name="Moule S."/>
            <person name="Mungall K.L."/>
            <person name="Murphy L.D."/>
            <person name="Niblett D."/>
            <person name="Odell C."/>
            <person name="Oliver K."/>
            <person name="O'Neil S."/>
            <person name="Pearson D."/>
            <person name="Quail M.A."/>
            <person name="Rabbinowitsch E."/>
            <person name="Rutherford K.M."/>
            <person name="Rutter S."/>
            <person name="Saunders D."/>
            <person name="Seeger K."/>
            <person name="Sharp S."/>
            <person name="Skelton J."/>
            <person name="Simmonds M.N."/>
            <person name="Squares R."/>
            <person name="Squares S."/>
            <person name="Stevens K."/>
            <person name="Taylor K."/>
            <person name="Taylor R.G."/>
            <person name="Tivey A."/>
            <person name="Walsh S.V."/>
            <person name="Warren T."/>
            <person name="Whitehead S."/>
            <person name="Woodward J.R."/>
            <person name="Volckaert G."/>
            <person name="Aert R."/>
            <person name="Robben J."/>
            <person name="Grymonprez B."/>
            <person name="Weltjens I."/>
            <person name="Vanstreels E."/>
            <person name="Rieger M."/>
            <person name="Schaefer M."/>
            <person name="Mueller-Auer S."/>
            <person name="Gabel C."/>
            <person name="Fuchs M."/>
            <person name="Duesterhoeft A."/>
            <person name="Fritzc C."/>
            <person name="Holzer E."/>
            <person name="Moestl D."/>
            <person name="Hilbert H."/>
            <person name="Borzym K."/>
            <person name="Langer I."/>
            <person name="Beck A."/>
            <person name="Lehrach H."/>
            <person name="Reinhardt R."/>
            <person name="Pohl T.M."/>
            <person name="Eger P."/>
            <person name="Zimmermann W."/>
            <person name="Wedler H."/>
            <person name="Wambutt R."/>
            <person name="Purnelle B."/>
            <person name="Goffeau A."/>
            <person name="Cadieu E."/>
            <person name="Dreano S."/>
            <person name="Gloux S."/>
            <person name="Lelaure V."/>
            <person name="Mottier S."/>
            <person name="Galibert F."/>
            <person name="Aves S.J."/>
            <person name="Xiang Z."/>
            <person name="Hunt C."/>
            <person name="Moore K."/>
            <person name="Hurst S.M."/>
            <person name="Lucas M."/>
            <person name="Rochet M."/>
            <person name="Gaillardin C."/>
            <person name="Tallada V.A."/>
            <person name="Garzon A."/>
            <person name="Thode G."/>
            <person name="Daga R.R."/>
            <person name="Cruzado L."/>
            <person name="Jimenez J."/>
            <person name="Sanchez M."/>
            <person name="del Rey F."/>
            <person name="Benito J."/>
            <person name="Dominguez A."/>
            <person name="Revuelta J.L."/>
            <person name="Moreno S."/>
            <person name="Armstrong J."/>
            <person name="Forsburg S.L."/>
            <person name="Cerutti L."/>
            <person name="Lowe T."/>
            <person name="McCombie W.R."/>
            <person name="Paulsen I."/>
            <person name="Potashkin J."/>
            <person name="Shpakovski G.V."/>
            <person name="Ussery D."/>
            <person name="Barrell B.G."/>
            <person name="Nurse P."/>
        </authorList>
    </citation>
    <scope>NUCLEOTIDE SEQUENCE [LARGE SCALE GENOMIC DNA]</scope>
    <source>
        <strain>972 / ATCC 24843</strain>
    </source>
</reference>